<dbReference type="EC" id="4.1.2.40" evidence="1"/>
<dbReference type="EMBL" id="CP001113">
    <property type="protein sequence ID" value="ACF61891.1"/>
    <property type="status" value="ALT_INIT"/>
    <property type="molecule type" value="Genomic_DNA"/>
</dbReference>
<dbReference type="RefSeq" id="WP_000469978.1">
    <property type="nucleotide sequence ID" value="NZ_CCMR01000001.1"/>
</dbReference>
<dbReference type="SMR" id="B4T6B9"/>
<dbReference type="KEGG" id="see:SNSL254_A3514"/>
<dbReference type="HOGENOM" id="CLU_040088_0_1_6"/>
<dbReference type="UniPathway" id="UPA00704">
    <property type="reaction ID" value="UER00716"/>
</dbReference>
<dbReference type="Proteomes" id="UP000008824">
    <property type="component" value="Chromosome"/>
</dbReference>
<dbReference type="GO" id="GO:0005829">
    <property type="term" value="C:cytosol"/>
    <property type="evidence" value="ECO:0007669"/>
    <property type="project" value="TreeGrafter"/>
</dbReference>
<dbReference type="GO" id="GO:0009025">
    <property type="term" value="F:tagatose-bisphosphate aldolase activity"/>
    <property type="evidence" value="ECO:0007669"/>
    <property type="project" value="UniProtKB-UniRule"/>
</dbReference>
<dbReference type="GO" id="GO:0008270">
    <property type="term" value="F:zinc ion binding"/>
    <property type="evidence" value="ECO:0007669"/>
    <property type="project" value="UniProtKB-UniRule"/>
</dbReference>
<dbReference type="GO" id="GO:2001059">
    <property type="term" value="P:D-tagatose 6-phosphate catabolic process"/>
    <property type="evidence" value="ECO:0007669"/>
    <property type="project" value="UniProtKB-UniRule"/>
</dbReference>
<dbReference type="GO" id="GO:0019404">
    <property type="term" value="P:galactitol catabolic process"/>
    <property type="evidence" value="ECO:0007669"/>
    <property type="project" value="InterPro"/>
</dbReference>
<dbReference type="CDD" id="cd00947">
    <property type="entry name" value="TBP_aldolase_IIB"/>
    <property type="match status" value="1"/>
</dbReference>
<dbReference type="FunFam" id="3.20.20.70:FF:000043">
    <property type="entry name" value="D-tagatose-1,6-bisphosphate aldolase subunit GatY"/>
    <property type="match status" value="1"/>
</dbReference>
<dbReference type="Gene3D" id="3.20.20.70">
    <property type="entry name" value="Aldolase class I"/>
    <property type="match status" value="1"/>
</dbReference>
<dbReference type="HAMAP" id="MF_01294">
    <property type="entry name" value="TagBP_aldolase_GatY"/>
    <property type="match status" value="1"/>
</dbReference>
<dbReference type="InterPro" id="IPR013785">
    <property type="entry name" value="Aldolase_TIM"/>
</dbReference>
<dbReference type="InterPro" id="IPR050246">
    <property type="entry name" value="Class_II_FBP_aldolase"/>
</dbReference>
<dbReference type="InterPro" id="IPR000771">
    <property type="entry name" value="FBA_II"/>
</dbReference>
<dbReference type="InterPro" id="IPR011288">
    <property type="entry name" value="TagBP_ald_KbaY/GatY"/>
</dbReference>
<dbReference type="InterPro" id="IPR023955">
    <property type="entry name" value="TagBP_aldolase_GatY"/>
</dbReference>
<dbReference type="NCBIfam" id="TIGR00167">
    <property type="entry name" value="cbbA"/>
    <property type="match status" value="1"/>
</dbReference>
<dbReference type="NCBIfam" id="NF006626">
    <property type="entry name" value="PRK09195.1"/>
    <property type="match status" value="1"/>
</dbReference>
<dbReference type="NCBIfam" id="NF009374">
    <property type="entry name" value="PRK12737.1"/>
    <property type="match status" value="1"/>
</dbReference>
<dbReference type="NCBIfam" id="TIGR01858">
    <property type="entry name" value="tag_bisphos_ald"/>
    <property type="match status" value="1"/>
</dbReference>
<dbReference type="PANTHER" id="PTHR30304">
    <property type="entry name" value="D-TAGATOSE-1,6-BISPHOSPHATE ALDOLASE"/>
    <property type="match status" value="1"/>
</dbReference>
<dbReference type="PANTHER" id="PTHR30304:SF0">
    <property type="entry name" value="D-TAGATOSE-1,6-BISPHOSPHATE ALDOLASE SUBUNIT GATY-RELATED"/>
    <property type="match status" value="1"/>
</dbReference>
<dbReference type="Pfam" id="PF01116">
    <property type="entry name" value="F_bP_aldolase"/>
    <property type="match status" value="1"/>
</dbReference>
<dbReference type="PIRSF" id="PIRSF001359">
    <property type="entry name" value="F_bP_aldolase_II"/>
    <property type="match status" value="1"/>
</dbReference>
<dbReference type="SUPFAM" id="SSF51569">
    <property type="entry name" value="Aldolase"/>
    <property type="match status" value="1"/>
</dbReference>
<dbReference type="PROSITE" id="PS00806">
    <property type="entry name" value="ALDOLASE_CLASS_II_2"/>
    <property type="match status" value="1"/>
</dbReference>
<comment type="function">
    <text evidence="1">Catalytic subunit of the tagatose-1,6-bisphosphate aldolase GatYZ, which catalyzes the reversible aldol condensation of dihydroxyacetone phosphate (DHAP or glycerone-phosphate) with glyceraldehyde 3-phosphate (G3P) to produce tagatose 1,6-bisphosphate (TBP). Requires GatZ subunit for full activity and stability. Is involved in the catabolism of galactitol.</text>
</comment>
<comment type="catalytic activity">
    <reaction evidence="1">
        <text>D-tagatofuranose 1,6-bisphosphate = D-glyceraldehyde 3-phosphate + dihydroxyacetone phosphate</text>
        <dbReference type="Rhea" id="RHEA:22948"/>
        <dbReference type="ChEBI" id="CHEBI:57642"/>
        <dbReference type="ChEBI" id="CHEBI:58694"/>
        <dbReference type="ChEBI" id="CHEBI:59776"/>
        <dbReference type="EC" id="4.1.2.40"/>
    </reaction>
</comment>
<comment type="cofactor">
    <cofactor evidence="1">
        <name>Zn(2+)</name>
        <dbReference type="ChEBI" id="CHEBI:29105"/>
    </cofactor>
    <text evidence="1">Binds 1 zinc ion per subunit.</text>
</comment>
<comment type="pathway">
    <text evidence="1">Carbohydrate metabolism; D-tagatose 6-phosphate degradation; D-glyceraldehyde 3-phosphate and glycerone phosphate from D-tagatose 6-phosphate: step 2/2.</text>
</comment>
<comment type="subunit">
    <text evidence="1">Forms a complex with GatZ.</text>
</comment>
<comment type="similarity">
    <text evidence="1">Belongs to the class II fructose-bisphosphate aldolase family. TagBP aldolase GatY subfamily.</text>
</comment>
<comment type="sequence caution" evidence="2">
    <conflict type="erroneous initiation">
        <sequence resource="EMBL-CDS" id="ACF61891"/>
    </conflict>
</comment>
<accession>B4T6B9</accession>
<organism>
    <name type="scientific">Salmonella newport (strain SL254)</name>
    <dbReference type="NCBI Taxonomy" id="423368"/>
    <lineage>
        <taxon>Bacteria</taxon>
        <taxon>Pseudomonadati</taxon>
        <taxon>Pseudomonadota</taxon>
        <taxon>Gammaproteobacteria</taxon>
        <taxon>Enterobacterales</taxon>
        <taxon>Enterobacteriaceae</taxon>
        <taxon>Salmonella</taxon>
    </lineage>
</organism>
<sequence>MFIISGRTMLKKAQQEGYAVPAFNIHNLETLQVVVETAAELRSPLIVAGTPGTFSYAGVGNIVAIAAELAKSWNHPLAVHLDHHEKLADIKMKVAAGVRSVMIDGSHFPFADNIALVKSVVDYCHRYDVSVEAELGRLGGQEDDLIVDGKDALYTHPEQAREFVEKTGIDSLAIAIGTAHGLYTAEPKLDFERLTEIRQRVDVPLVLHGASGLPTRDITRAISLGICKVNVATELKIAFSGALKNYLTQHAEASDPRHYMIPAKAAMKEVVRKVIADCGCDGKL</sequence>
<reference key="1">
    <citation type="journal article" date="2011" name="J. Bacteriol.">
        <title>Comparative genomics of 28 Salmonella enterica isolates: evidence for CRISPR-mediated adaptive sublineage evolution.</title>
        <authorList>
            <person name="Fricke W.F."/>
            <person name="Mammel M.K."/>
            <person name="McDermott P.F."/>
            <person name="Tartera C."/>
            <person name="White D.G."/>
            <person name="Leclerc J.E."/>
            <person name="Ravel J."/>
            <person name="Cebula T.A."/>
        </authorList>
    </citation>
    <scope>NUCLEOTIDE SEQUENCE [LARGE SCALE GENOMIC DNA]</scope>
    <source>
        <strain>SL254</strain>
    </source>
</reference>
<feature type="chain" id="PRO_0000355346" description="D-tagatose-1,6-bisphosphate aldolase subunit GatY">
    <location>
        <begin position="1"/>
        <end position="284"/>
    </location>
</feature>
<feature type="active site" description="Proton donor" evidence="1">
    <location>
        <position position="82"/>
    </location>
</feature>
<feature type="binding site" evidence="1">
    <location>
        <position position="83"/>
    </location>
    <ligand>
        <name>Zn(2+)</name>
        <dbReference type="ChEBI" id="CHEBI:29105"/>
        <note>catalytic</note>
    </ligand>
</feature>
<feature type="binding site" evidence="1">
    <location>
        <position position="180"/>
    </location>
    <ligand>
        <name>Zn(2+)</name>
        <dbReference type="ChEBI" id="CHEBI:29105"/>
        <note>catalytic</note>
    </ligand>
</feature>
<feature type="binding site" evidence="1">
    <location>
        <position position="181"/>
    </location>
    <ligand>
        <name>dihydroxyacetone phosphate</name>
        <dbReference type="ChEBI" id="CHEBI:57642"/>
    </ligand>
</feature>
<feature type="binding site" evidence="1">
    <location>
        <position position="208"/>
    </location>
    <ligand>
        <name>Zn(2+)</name>
        <dbReference type="ChEBI" id="CHEBI:29105"/>
        <note>catalytic</note>
    </ligand>
</feature>
<feature type="binding site" evidence="1">
    <location>
        <begin position="209"/>
        <end position="211"/>
    </location>
    <ligand>
        <name>dihydroxyacetone phosphate</name>
        <dbReference type="ChEBI" id="CHEBI:57642"/>
    </ligand>
</feature>
<feature type="binding site" evidence="1">
    <location>
        <begin position="230"/>
        <end position="233"/>
    </location>
    <ligand>
        <name>dihydroxyacetone phosphate</name>
        <dbReference type="ChEBI" id="CHEBI:57642"/>
    </ligand>
</feature>
<evidence type="ECO:0000255" key="1">
    <source>
        <dbReference type="HAMAP-Rule" id="MF_01294"/>
    </source>
</evidence>
<evidence type="ECO:0000305" key="2"/>
<proteinExistence type="inferred from homology"/>
<keyword id="KW-0298">Galactitol metabolism</keyword>
<keyword id="KW-0456">Lyase</keyword>
<keyword id="KW-0479">Metal-binding</keyword>
<keyword id="KW-0862">Zinc</keyword>
<gene>
    <name evidence="1" type="primary">gatY</name>
    <name type="ordered locus">SNSL254_A3514</name>
</gene>
<name>GATY_SALNS</name>
<protein>
    <recommendedName>
        <fullName evidence="1">D-tagatose-1,6-bisphosphate aldolase subunit GatY</fullName>
        <shortName evidence="1">TBPA</shortName>
        <shortName evidence="1">TagBP aldolase</shortName>
        <ecNumber evidence="1">4.1.2.40</ecNumber>
    </recommendedName>
    <alternativeName>
        <fullName evidence="1">D-tagatose-bisphosphate aldolase class II</fullName>
    </alternativeName>
    <alternativeName>
        <fullName evidence="1">Tagatose-bisphosphate aldolase</fullName>
    </alternativeName>
</protein>